<name>RL23_CLAM3</name>
<evidence type="ECO:0000255" key="1">
    <source>
        <dbReference type="HAMAP-Rule" id="MF_01369"/>
    </source>
</evidence>
<evidence type="ECO:0000305" key="2"/>
<sequence length="99" mass="10932">MSATQKDPRDIIIAPVVSEKSYGLIDQGKYTFIVDPRSNKTEIKLAIEKIFGVQVASVNTLNKQGKTRRTKFGMGKRKDTKRAIVSLKSGSIDIFTTVG</sequence>
<comment type="function">
    <text evidence="1">One of the early assembly proteins it binds 23S rRNA. One of the proteins that surrounds the polypeptide exit tunnel on the outside of the ribosome. Forms the main docking site for trigger factor binding to the ribosome.</text>
</comment>
<comment type="subunit">
    <text evidence="1">Part of the 50S ribosomal subunit. Contacts protein L29, and trigger factor when it is bound to the ribosome.</text>
</comment>
<comment type="similarity">
    <text evidence="1">Belongs to the universal ribosomal protein uL23 family.</text>
</comment>
<organism>
    <name type="scientific">Clavibacter michiganensis subsp. michiganensis (strain NCPPB 382)</name>
    <dbReference type="NCBI Taxonomy" id="443906"/>
    <lineage>
        <taxon>Bacteria</taxon>
        <taxon>Bacillati</taxon>
        <taxon>Actinomycetota</taxon>
        <taxon>Actinomycetes</taxon>
        <taxon>Micrococcales</taxon>
        <taxon>Microbacteriaceae</taxon>
        <taxon>Clavibacter</taxon>
    </lineage>
</organism>
<proteinExistence type="inferred from homology"/>
<feature type="chain" id="PRO_1000184075" description="Large ribosomal subunit protein uL23">
    <location>
        <begin position="1"/>
        <end position="99"/>
    </location>
</feature>
<protein>
    <recommendedName>
        <fullName evidence="1">Large ribosomal subunit protein uL23</fullName>
    </recommendedName>
    <alternativeName>
        <fullName evidence="2">50S ribosomal protein L23</fullName>
    </alternativeName>
</protein>
<accession>A5CUB1</accession>
<keyword id="KW-0687">Ribonucleoprotein</keyword>
<keyword id="KW-0689">Ribosomal protein</keyword>
<keyword id="KW-0694">RNA-binding</keyword>
<keyword id="KW-0699">rRNA-binding</keyword>
<dbReference type="EMBL" id="AM711867">
    <property type="protein sequence ID" value="CAN02698.1"/>
    <property type="molecule type" value="Genomic_DNA"/>
</dbReference>
<dbReference type="RefSeq" id="WP_012039304.1">
    <property type="nucleotide sequence ID" value="NC_009480.1"/>
</dbReference>
<dbReference type="SMR" id="A5CUB1"/>
<dbReference type="GeneID" id="92984327"/>
<dbReference type="KEGG" id="cmi:CMM_2615"/>
<dbReference type="eggNOG" id="COG0089">
    <property type="taxonomic scope" value="Bacteria"/>
</dbReference>
<dbReference type="HOGENOM" id="CLU_037562_3_2_11"/>
<dbReference type="OrthoDB" id="9793353at2"/>
<dbReference type="Proteomes" id="UP000001564">
    <property type="component" value="Chromosome"/>
</dbReference>
<dbReference type="GO" id="GO:1990904">
    <property type="term" value="C:ribonucleoprotein complex"/>
    <property type="evidence" value="ECO:0007669"/>
    <property type="project" value="UniProtKB-KW"/>
</dbReference>
<dbReference type="GO" id="GO:0005840">
    <property type="term" value="C:ribosome"/>
    <property type="evidence" value="ECO:0007669"/>
    <property type="project" value="UniProtKB-KW"/>
</dbReference>
<dbReference type="GO" id="GO:0019843">
    <property type="term" value="F:rRNA binding"/>
    <property type="evidence" value="ECO:0007669"/>
    <property type="project" value="UniProtKB-UniRule"/>
</dbReference>
<dbReference type="GO" id="GO:0003735">
    <property type="term" value="F:structural constituent of ribosome"/>
    <property type="evidence" value="ECO:0007669"/>
    <property type="project" value="InterPro"/>
</dbReference>
<dbReference type="GO" id="GO:0006412">
    <property type="term" value="P:translation"/>
    <property type="evidence" value="ECO:0007669"/>
    <property type="project" value="UniProtKB-UniRule"/>
</dbReference>
<dbReference type="FunFam" id="3.30.70.330:FF:000001">
    <property type="entry name" value="50S ribosomal protein L23"/>
    <property type="match status" value="1"/>
</dbReference>
<dbReference type="Gene3D" id="3.30.70.330">
    <property type="match status" value="1"/>
</dbReference>
<dbReference type="HAMAP" id="MF_01369_B">
    <property type="entry name" value="Ribosomal_uL23_B"/>
    <property type="match status" value="1"/>
</dbReference>
<dbReference type="InterPro" id="IPR012677">
    <property type="entry name" value="Nucleotide-bd_a/b_plait_sf"/>
</dbReference>
<dbReference type="InterPro" id="IPR013025">
    <property type="entry name" value="Ribosomal_uL23-like"/>
</dbReference>
<dbReference type="InterPro" id="IPR012678">
    <property type="entry name" value="Ribosomal_uL23/eL15/eS24_sf"/>
</dbReference>
<dbReference type="NCBIfam" id="NF004363">
    <property type="entry name" value="PRK05738.2-4"/>
    <property type="match status" value="1"/>
</dbReference>
<dbReference type="NCBIfam" id="NF004364">
    <property type="entry name" value="PRK05738.2-5"/>
    <property type="match status" value="1"/>
</dbReference>
<dbReference type="PANTHER" id="PTHR11620">
    <property type="entry name" value="60S RIBOSOMAL PROTEIN L23A"/>
    <property type="match status" value="1"/>
</dbReference>
<dbReference type="Pfam" id="PF00276">
    <property type="entry name" value="Ribosomal_L23"/>
    <property type="match status" value="1"/>
</dbReference>
<dbReference type="SUPFAM" id="SSF54189">
    <property type="entry name" value="Ribosomal proteins S24e, L23 and L15e"/>
    <property type="match status" value="1"/>
</dbReference>
<gene>
    <name evidence="1" type="primary">rplW</name>
    <name type="ordered locus">CMM_2615</name>
</gene>
<reference key="1">
    <citation type="journal article" date="2008" name="J. Bacteriol.">
        <title>The genome sequence of the tomato-pathogenic actinomycete Clavibacter michiganensis subsp. michiganensis NCPPB382 reveals a large island involved in pathogenicity.</title>
        <authorList>
            <person name="Gartemann K.-H."/>
            <person name="Abt B."/>
            <person name="Bekel T."/>
            <person name="Burger A."/>
            <person name="Engemann J."/>
            <person name="Fluegel M."/>
            <person name="Gaigalat L."/>
            <person name="Goesmann A."/>
            <person name="Graefen I."/>
            <person name="Kalinowski J."/>
            <person name="Kaup O."/>
            <person name="Kirchner O."/>
            <person name="Krause L."/>
            <person name="Linke B."/>
            <person name="McHardy A."/>
            <person name="Meyer F."/>
            <person name="Pohle S."/>
            <person name="Rueckert C."/>
            <person name="Schneiker S."/>
            <person name="Zellermann E.-M."/>
            <person name="Puehler A."/>
            <person name="Eichenlaub R."/>
            <person name="Kaiser O."/>
            <person name="Bartels D."/>
        </authorList>
    </citation>
    <scope>NUCLEOTIDE SEQUENCE [LARGE SCALE GENOMIC DNA]</scope>
    <source>
        <strain>NCPPB 382</strain>
    </source>
</reference>